<name>ALR_RICCN</name>
<accession>Q92JD9</accession>
<gene>
    <name type="primary">alr</name>
    <name type="ordered locus">RC0128</name>
</gene>
<proteinExistence type="inferred from homology"/>
<sequence>MSLCTVEINLSTIKNNYLLLQDICKTSLVGAAVKANGYGLGAVQISKALIEENCRHFFVASSEEGVNLRNALGLDVNILVLNGVFEHDALELIEYNLTPVLNNLKQIEIWQKFSNLKNRLLPCYLHFNTGINRLGLSSDEIEQLINDRDLLKGLDLQYIISHLAISEEIDNPYNLEQLNRFKAYLQYFPNVKASLANSGGIFLGQDYHFDLARPGAALYGLNPLTKNPVTLKAPIIHLQNLTLDSHIGYNMTFTTKRDSVIATLPLGYADGFSRNFSNQGEVFINSRSVPIVGRVSMDLINIDVTDLPPSEIFLGQEAEIIGNYCTPDKIASIIGTIGYEVLTNLGSRYKRKYIG</sequence>
<organism>
    <name type="scientific">Rickettsia conorii (strain ATCC VR-613 / Malish 7)</name>
    <dbReference type="NCBI Taxonomy" id="272944"/>
    <lineage>
        <taxon>Bacteria</taxon>
        <taxon>Pseudomonadati</taxon>
        <taxon>Pseudomonadota</taxon>
        <taxon>Alphaproteobacteria</taxon>
        <taxon>Rickettsiales</taxon>
        <taxon>Rickettsiaceae</taxon>
        <taxon>Rickettsieae</taxon>
        <taxon>Rickettsia</taxon>
        <taxon>spotted fever group</taxon>
    </lineage>
</organism>
<feature type="chain" id="PRO_0000114556" description="Alanine racemase">
    <location>
        <begin position="1"/>
        <end position="355"/>
    </location>
</feature>
<feature type="active site" description="Proton acceptor; specific for D-alanine" evidence="1">
    <location>
        <position position="34"/>
    </location>
</feature>
<feature type="active site" description="Proton acceptor; specific for L-alanine" evidence="1">
    <location>
        <position position="249"/>
    </location>
</feature>
<feature type="binding site" evidence="1">
    <location>
        <position position="133"/>
    </location>
    <ligand>
        <name>substrate</name>
    </ligand>
</feature>
<feature type="binding site" evidence="1">
    <location>
        <position position="297"/>
    </location>
    <ligand>
        <name>substrate</name>
    </ligand>
</feature>
<feature type="modified residue" description="N6-(pyridoxal phosphate)lysine" evidence="1">
    <location>
        <position position="34"/>
    </location>
</feature>
<dbReference type="EC" id="5.1.1.1" evidence="1"/>
<dbReference type="EMBL" id="AE006914">
    <property type="protein sequence ID" value="AAL02666.1"/>
    <property type="molecule type" value="Genomic_DNA"/>
</dbReference>
<dbReference type="PIR" id="H97715">
    <property type="entry name" value="H97715"/>
</dbReference>
<dbReference type="RefSeq" id="WP_010976808.1">
    <property type="nucleotide sequence ID" value="NC_003103.1"/>
</dbReference>
<dbReference type="SMR" id="Q92JD9"/>
<dbReference type="GeneID" id="928065"/>
<dbReference type="KEGG" id="rco:RC0128"/>
<dbReference type="HOGENOM" id="CLU_028393_1_1_5"/>
<dbReference type="UniPathway" id="UPA00042">
    <property type="reaction ID" value="UER00497"/>
</dbReference>
<dbReference type="Proteomes" id="UP000000816">
    <property type="component" value="Chromosome"/>
</dbReference>
<dbReference type="GO" id="GO:0005829">
    <property type="term" value="C:cytosol"/>
    <property type="evidence" value="ECO:0007669"/>
    <property type="project" value="TreeGrafter"/>
</dbReference>
<dbReference type="GO" id="GO:0008784">
    <property type="term" value="F:alanine racemase activity"/>
    <property type="evidence" value="ECO:0007669"/>
    <property type="project" value="UniProtKB-UniRule"/>
</dbReference>
<dbReference type="GO" id="GO:0030170">
    <property type="term" value="F:pyridoxal phosphate binding"/>
    <property type="evidence" value="ECO:0007669"/>
    <property type="project" value="UniProtKB-UniRule"/>
</dbReference>
<dbReference type="GO" id="GO:0030632">
    <property type="term" value="P:D-alanine biosynthetic process"/>
    <property type="evidence" value="ECO:0007669"/>
    <property type="project" value="UniProtKB-UniRule"/>
</dbReference>
<dbReference type="CDD" id="cd00430">
    <property type="entry name" value="PLPDE_III_AR"/>
    <property type="match status" value="1"/>
</dbReference>
<dbReference type="Gene3D" id="3.20.20.10">
    <property type="entry name" value="Alanine racemase"/>
    <property type="match status" value="1"/>
</dbReference>
<dbReference type="Gene3D" id="2.40.37.10">
    <property type="entry name" value="Lyase, Ornithine Decarboxylase, Chain A, domain 1"/>
    <property type="match status" value="1"/>
</dbReference>
<dbReference type="HAMAP" id="MF_01201">
    <property type="entry name" value="Ala_racemase"/>
    <property type="match status" value="1"/>
</dbReference>
<dbReference type="InterPro" id="IPR000821">
    <property type="entry name" value="Ala_racemase"/>
</dbReference>
<dbReference type="InterPro" id="IPR009006">
    <property type="entry name" value="Ala_racemase/Decarboxylase_C"/>
</dbReference>
<dbReference type="InterPro" id="IPR011079">
    <property type="entry name" value="Ala_racemase_C"/>
</dbReference>
<dbReference type="InterPro" id="IPR001608">
    <property type="entry name" value="Ala_racemase_N"/>
</dbReference>
<dbReference type="InterPro" id="IPR020622">
    <property type="entry name" value="Ala_racemase_pyridoxalP-BS"/>
</dbReference>
<dbReference type="InterPro" id="IPR029066">
    <property type="entry name" value="PLP-binding_barrel"/>
</dbReference>
<dbReference type="NCBIfam" id="TIGR00492">
    <property type="entry name" value="alr"/>
    <property type="match status" value="1"/>
</dbReference>
<dbReference type="NCBIfam" id="NF000792">
    <property type="entry name" value="PRK00053.2-3"/>
    <property type="match status" value="1"/>
</dbReference>
<dbReference type="PANTHER" id="PTHR30511">
    <property type="entry name" value="ALANINE RACEMASE"/>
    <property type="match status" value="1"/>
</dbReference>
<dbReference type="PANTHER" id="PTHR30511:SF0">
    <property type="entry name" value="ALANINE RACEMASE, CATABOLIC-RELATED"/>
    <property type="match status" value="1"/>
</dbReference>
<dbReference type="Pfam" id="PF00842">
    <property type="entry name" value="Ala_racemase_C"/>
    <property type="match status" value="1"/>
</dbReference>
<dbReference type="Pfam" id="PF01168">
    <property type="entry name" value="Ala_racemase_N"/>
    <property type="match status" value="1"/>
</dbReference>
<dbReference type="PRINTS" id="PR00992">
    <property type="entry name" value="ALARACEMASE"/>
</dbReference>
<dbReference type="SMART" id="SM01005">
    <property type="entry name" value="Ala_racemase_C"/>
    <property type="match status" value="1"/>
</dbReference>
<dbReference type="SUPFAM" id="SSF50621">
    <property type="entry name" value="Alanine racemase C-terminal domain-like"/>
    <property type="match status" value="1"/>
</dbReference>
<dbReference type="SUPFAM" id="SSF51419">
    <property type="entry name" value="PLP-binding barrel"/>
    <property type="match status" value="1"/>
</dbReference>
<dbReference type="PROSITE" id="PS00395">
    <property type="entry name" value="ALANINE_RACEMASE"/>
    <property type="match status" value="1"/>
</dbReference>
<evidence type="ECO:0000255" key="1">
    <source>
        <dbReference type="HAMAP-Rule" id="MF_01201"/>
    </source>
</evidence>
<keyword id="KW-0413">Isomerase</keyword>
<keyword id="KW-0663">Pyridoxal phosphate</keyword>
<protein>
    <recommendedName>
        <fullName evidence="1">Alanine racemase</fullName>
        <ecNumber evidence="1">5.1.1.1</ecNumber>
    </recommendedName>
</protein>
<reference key="1">
    <citation type="journal article" date="2001" name="Science">
        <title>Mechanisms of evolution in Rickettsia conorii and R. prowazekii.</title>
        <authorList>
            <person name="Ogata H."/>
            <person name="Audic S."/>
            <person name="Renesto-Audiffren P."/>
            <person name="Fournier P.-E."/>
            <person name="Barbe V."/>
            <person name="Samson D."/>
            <person name="Roux V."/>
            <person name="Cossart P."/>
            <person name="Weissenbach J."/>
            <person name="Claverie J.-M."/>
            <person name="Raoult D."/>
        </authorList>
    </citation>
    <scope>NUCLEOTIDE SEQUENCE [LARGE SCALE GENOMIC DNA]</scope>
    <source>
        <strain>ATCC VR-613 / Malish 7</strain>
    </source>
</reference>
<comment type="function">
    <text evidence="1">Catalyzes the interconversion of L-alanine and D-alanine. May also act on other amino acids.</text>
</comment>
<comment type="catalytic activity">
    <reaction evidence="1">
        <text>L-alanine = D-alanine</text>
        <dbReference type="Rhea" id="RHEA:20249"/>
        <dbReference type="ChEBI" id="CHEBI:57416"/>
        <dbReference type="ChEBI" id="CHEBI:57972"/>
        <dbReference type="EC" id="5.1.1.1"/>
    </reaction>
</comment>
<comment type="cofactor">
    <cofactor evidence="1">
        <name>pyridoxal 5'-phosphate</name>
        <dbReference type="ChEBI" id="CHEBI:597326"/>
    </cofactor>
</comment>
<comment type="pathway">
    <text evidence="1">Amino-acid biosynthesis; D-alanine biosynthesis; D-alanine from L-alanine: step 1/1.</text>
</comment>
<comment type="similarity">
    <text evidence="1">Belongs to the alanine racemase family.</text>
</comment>